<feature type="chain" id="PRO_0000093183" description="Lipopolysaccharide export system ATP-binding protein LptB">
    <location>
        <begin position="1" status="less than"/>
        <end position="68"/>
    </location>
</feature>
<feature type="non-terminal residue">
    <location>
        <position position="1"/>
    </location>
</feature>
<keyword id="KW-0067">ATP-binding</keyword>
<keyword id="KW-0997">Cell inner membrane</keyword>
<keyword id="KW-1003">Cell membrane</keyword>
<keyword id="KW-0963">Cytoplasm</keyword>
<keyword id="KW-0472">Membrane</keyword>
<keyword id="KW-0547">Nucleotide-binding</keyword>
<keyword id="KW-1278">Translocase</keyword>
<keyword id="KW-0813">Transport</keyword>
<accession>P11160</accession>
<comment type="function">
    <text evidence="1">Part of the ABC transporter complex LptBFG involved in the translocation of lipopolysaccharide (LPS) from the inner membrane to the outer membrane. Probably responsible for energy coupling to the transport system (By similarity).</text>
</comment>
<comment type="subunit">
    <text evidence="1">Component of the lipopolysaccharide transport and assembly complex. The LptBFG transporter is composed of two ATP-binding proteins (LptB) and two transmembrane proteins (LptF and LptG) (By similarity).</text>
</comment>
<comment type="subcellular location">
    <subcellularLocation>
        <location>Cytoplasm</location>
    </subcellularLocation>
    <subcellularLocation>
        <location evidence="1">Cell inner membrane</location>
        <topology evidence="1">Peripheral membrane protein</topology>
        <orientation evidence="1">Cytoplasmic side</orientation>
    </subcellularLocation>
</comment>
<comment type="similarity">
    <text evidence="2">Belongs to the ABC transporter superfamily. Outer membrane lipopolysaccharide export (TC 1.B.42) family.</text>
</comment>
<dbReference type="EC" id="7.5.2.-"/>
<dbReference type="EMBL" id="X03147">
    <property type="status" value="NOT_ANNOTATED_CDS"/>
    <property type="molecule type" value="Genomic_DNA"/>
</dbReference>
<dbReference type="SMR" id="P11160"/>
<dbReference type="STRING" id="571.AB185_09975"/>
<dbReference type="eggNOG" id="COG1137">
    <property type="taxonomic scope" value="Bacteria"/>
</dbReference>
<dbReference type="GO" id="GO:0005737">
    <property type="term" value="C:cytoplasm"/>
    <property type="evidence" value="ECO:0007669"/>
    <property type="project" value="UniProtKB-SubCell"/>
</dbReference>
<dbReference type="GO" id="GO:0005886">
    <property type="term" value="C:plasma membrane"/>
    <property type="evidence" value="ECO:0007669"/>
    <property type="project" value="UniProtKB-SubCell"/>
</dbReference>
<dbReference type="GO" id="GO:0005524">
    <property type="term" value="F:ATP binding"/>
    <property type="evidence" value="ECO:0007669"/>
    <property type="project" value="UniProtKB-KW"/>
</dbReference>
<dbReference type="Gene3D" id="3.40.50.300">
    <property type="entry name" value="P-loop containing nucleotide triphosphate hydrolases"/>
    <property type="match status" value="1"/>
</dbReference>
<dbReference type="InterPro" id="IPR051120">
    <property type="entry name" value="ABC_AA/LPS_Transport"/>
</dbReference>
<dbReference type="InterPro" id="IPR032823">
    <property type="entry name" value="BCA_ABC_TP_C"/>
</dbReference>
<dbReference type="InterPro" id="IPR027417">
    <property type="entry name" value="P-loop_NTPase"/>
</dbReference>
<dbReference type="PANTHER" id="PTHR45772">
    <property type="entry name" value="CONSERVED COMPONENT OF ABC TRANSPORTER FOR NATURAL AMINO ACIDS-RELATED"/>
    <property type="match status" value="1"/>
</dbReference>
<dbReference type="PANTHER" id="PTHR45772:SF10">
    <property type="entry name" value="LIPOPOLYSACCHARIDE EXPORT SYSTEM ATP-BINDING PROTEIN LPTB"/>
    <property type="match status" value="1"/>
</dbReference>
<dbReference type="Pfam" id="PF12399">
    <property type="entry name" value="BCA_ABC_TP_C"/>
    <property type="match status" value="1"/>
</dbReference>
<dbReference type="SUPFAM" id="SSF52540">
    <property type="entry name" value="P-loop containing nucleoside triphosphate hydrolases"/>
    <property type="match status" value="1"/>
</dbReference>
<organism>
    <name type="scientific">Klebsiella oxytoca</name>
    <dbReference type="NCBI Taxonomy" id="571"/>
    <lineage>
        <taxon>Bacteria</taxon>
        <taxon>Pseudomonadati</taxon>
        <taxon>Pseudomonadota</taxon>
        <taxon>Gammaproteobacteria</taxon>
        <taxon>Enterobacterales</taxon>
        <taxon>Enterobacteriaceae</taxon>
        <taxon>Klebsiella/Raoultella group</taxon>
        <taxon>Klebsiella</taxon>
    </lineage>
</organism>
<proteinExistence type="inferred from homology"/>
<sequence length="68" mass="7914">IDIKRIIEHLPRQRLGVLITDHNVRETLAVCERAYIVSQGHLIAHGTPQQILEDEQVKRVYLGEDFRL</sequence>
<reference key="1">
    <citation type="journal article" date="1985" name="Nucleic Acids Res.">
        <title>The nucleotide sequence of the nitrogen-regulation gene ntrA of Klebsiella pneumoniae and comparison with conserved features in bacterial RNA polymerase sigma factors.</title>
        <authorList>
            <person name="Merrick M.J."/>
            <person name="Gibbins J.R."/>
        </authorList>
    </citation>
    <scope>NUCLEOTIDE SEQUENCE [GENOMIC DNA]</scope>
</reference>
<name>LPTB_KLEOX</name>
<evidence type="ECO:0000250" key="1"/>
<evidence type="ECO:0000305" key="2"/>
<protein>
    <recommendedName>
        <fullName>Lipopolysaccharide export system ATP-binding protein LptB</fullName>
        <ecNumber>7.5.2.-</ecNumber>
    </recommendedName>
</protein>
<gene>
    <name type="primary">lptB</name>
</gene>